<gene>
    <name evidence="1" type="primary">iscR</name>
    <name type="ordered locus">CKO_00250</name>
</gene>
<evidence type="ECO:0000255" key="1">
    <source>
        <dbReference type="HAMAP-Rule" id="MF_01176"/>
    </source>
</evidence>
<evidence type="ECO:0000256" key="2">
    <source>
        <dbReference type="SAM" id="MobiDB-lite"/>
    </source>
</evidence>
<sequence length="163" mass="17452">MRLTSKGRYAVTAMLDVALNSEAGPVPLADISERQGISLSYLEQLFSRLRKNGLVSSVRGPGGGYLLGKDAGSIAVGEVISAVDESVDATRCQGKGGCQGGDKCLTHALWRDLSDRLTGFLNNITLGELVNNQEVLDVSDRQHTHDAPRSTRTQDAIDVKLRA</sequence>
<dbReference type="EMBL" id="CP000822">
    <property type="protein sequence ID" value="ABV11414.1"/>
    <property type="molecule type" value="Genomic_DNA"/>
</dbReference>
<dbReference type="RefSeq" id="WP_012131246.1">
    <property type="nucleotide sequence ID" value="NC_009792.1"/>
</dbReference>
<dbReference type="SMR" id="A8AD51"/>
<dbReference type="STRING" id="290338.CKO_00250"/>
<dbReference type="GeneID" id="45134533"/>
<dbReference type="KEGG" id="cko:CKO_00250"/>
<dbReference type="HOGENOM" id="CLU_107144_0_0_6"/>
<dbReference type="OrthoDB" id="9808360at2"/>
<dbReference type="Proteomes" id="UP000008148">
    <property type="component" value="Chromosome"/>
</dbReference>
<dbReference type="GO" id="GO:0005829">
    <property type="term" value="C:cytosol"/>
    <property type="evidence" value="ECO:0007669"/>
    <property type="project" value="TreeGrafter"/>
</dbReference>
<dbReference type="GO" id="GO:0051537">
    <property type="term" value="F:2 iron, 2 sulfur cluster binding"/>
    <property type="evidence" value="ECO:0007669"/>
    <property type="project" value="UniProtKB-KW"/>
</dbReference>
<dbReference type="GO" id="GO:0003700">
    <property type="term" value="F:DNA-binding transcription factor activity"/>
    <property type="evidence" value="ECO:0007669"/>
    <property type="project" value="UniProtKB-UniRule"/>
</dbReference>
<dbReference type="GO" id="GO:0003690">
    <property type="term" value="F:double-stranded DNA binding"/>
    <property type="evidence" value="ECO:0007669"/>
    <property type="project" value="UniProtKB-UniRule"/>
</dbReference>
<dbReference type="GO" id="GO:0005506">
    <property type="term" value="F:iron ion binding"/>
    <property type="evidence" value="ECO:0007669"/>
    <property type="project" value="UniProtKB-UniRule"/>
</dbReference>
<dbReference type="FunFam" id="1.10.10.10:FF:000026">
    <property type="entry name" value="HTH-type transcriptional regulator IscR"/>
    <property type="match status" value="1"/>
</dbReference>
<dbReference type="Gene3D" id="1.10.10.10">
    <property type="entry name" value="Winged helix-like DNA-binding domain superfamily/Winged helix DNA-binding domain"/>
    <property type="match status" value="1"/>
</dbReference>
<dbReference type="HAMAP" id="MF_01176">
    <property type="entry name" value="HTH_type_IscR"/>
    <property type="match status" value="1"/>
</dbReference>
<dbReference type="InterPro" id="IPR010242">
    <property type="entry name" value="TF_HTH_IscR"/>
</dbReference>
<dbReference type="InterPro" id="IPR030489">
    <property type="entry name" value="TR_Rrf2-type_CS"/>
</dbReference>
<dbReference type="InterPro" id="IPR000944">
    <property type="entry name" value="Tscrpt_reg_Rrf2"/>
</dbReference>
<dbReference type="InterPro" id="IPR036388">
    <property type="entry name" value="WH-like_DNA-bd_sf"/>
</dbReference>
<dbReference type="InterPro" id="IPR036390">
    <property type="entry name" value="WH_DNA-bd_sf"/>
</dbReference>
<dbReference type="NCBIfam" id="TIGR02010">
    <property type="entry name" value="IscR"/>
    <property type="match status" value="1"/>
</dbReference>
<dbReference type="NCBIfam" id="NF008110">
    <property type="entry name" value="PRK10857.1"/>
    <property type="match status" value="1"/>
</dbReference>
<dbReference type="NCBIfam" id="TIGR00738">
    <property type="entry name" value="rrf2_super"/>
    <property type="match status" value="1"/>
</dbReference>
<dbReference type="PANTHER" id="PTHR33221:SF5">
    <property type="entry name" value="HTH-TYPE TRANSCRIPTIONAL REGULATOR ISCR"/>
    <property type="match status" value="1"/>
</dbReference>
<dbReference type="PANTHER" id="PTHR33221">
    <property type="entry name" value="WINGED HELIX-TURN-HELIX TRANSCRIPTIONAL REGULATOR, RRF2 FAMILY"/>
    <property type="match status" value="1"/>
</dbReference>
<dbReference type="Pfam" id="PF02082">
    <property type="entry name" value="Rrf2"/>
    <property type="match status" value="1"/>
</dbReference>
<dbReference type="SUPFAM" id="SSF46785">
    <property type="entry name" value="Winged helix' DNA-binding domain"/>
    <property type="match status" value="1"/>
</dbReference>
<dbReference type="PROSITE" id="PS01332">
    <property type="entry name" value="HTH_RRF2_1"/>
    <property type="match status" value="1"/>
</dbReference>
<dbReference type="PROSITE" id="PS51197">
    <property type="entry name" value="HTH_RRF2_2"/>
    <property type="match status" value="1"/>
</dbReference>
<feature type="chain" id="PRO_1000085414" description="HTH-type transcriptional regulator IscR">
    <location>
        <begin position="1"/>
        <end position="163"/>
    </location>
</feature>
<feature type="domain" description="HTH rrf2-type" evidence="1">
    <location>
        <begin position="2"/>
        <end position="131"/>
    </location>
</feature>
<feature type="DNA-binding region" description="H-T-H motif" evidence="1">
    <location>
        <begin position="28"/>
        <end position="51"/>
    </location>
</feature>
<feature type="region of interest" description="Disordered" evidence="2">
    <location>
        <begin position="140"/>
        <end position="163"/>
    </location>
</feature>
<feature type="compositionally biased region" description="Basic and acidic residues" evidence="2">
    <location>
        <begin position="140"/>
        <end position="149"/>
    </location>
</feature>
<feature type="binding site" evidence="1">
    <location>
        <position position="92"/>
    </location>
    <ligand>
        <name>[2Fe-2S] cluster</name>
        <dbReference type="ChEBI" id="CHEBI:190135"/>
    </ligand>
</feature>
<feature type="binding site" evidence="1">
    <location>
        <position position="98"/>
    </location>
    <ligand>
        <name>[2Fe-2S] cluster</name>
        <dbReference type="ChEBI" id="CHEBI:190135"/>
    </ligand>
</feature>
<feature type="binding site" evidence="1">
    <location>
        <position position="104"/>
    </location>
    <ligand>
        <name>[2Fe-2S] cluster</name>
        <dbReference type="ChEBI" id="CHEBI:190135"/>
    </ligand>
</feature>
<name>ISCR_CITK8</name>
<comment type="function">
    <text evidence="1">Regulates the transcription of several operons and genes involved in the biogenesis of Fe-S clusters and Fe-S-containing proteins.</text>
</comment>
<comment type="cofactor">
    <cofactor evidence="1">
        <name>[2Fe-2S] cluster</name>
        <dbReference type="ChEBI" id="CHEBI:190135"/>
    </cofactor>
    <text evidence="1">Binds 1 [2Fe-2S] cluster.</text>
</comment>
<reference key="1">
    <citation type="submission" date="2007-08" db="EMBL/GenBank/DDBJ databases">
        <authorList>
            <consortium name="The Citrobacter koseri Genome Sequencing Project"/>
            <person name="McClelland M."/>
            <person name="Sanderson E.K."/>
            <person name="Porwollik S."/>
            <person name="Spieth J."/>
            <person name="Clifton W.S."/>
            <person name="Latreille P."/>
            <person name="Courtney L."/>
            <person name="Wang C."/>
            <person name="Pepin K."/>
            <person name="Bhonagiri V."/>
            <person name="Nash W."/>
            <person name="Johnson M."/>
            <person name="Thiruvilangam P."/>
            <person name="Wilson R."/>
        </authorList>
    </citation>
    <scope>NUCLEOTIDE SEQUENCE [LARGE SCALE GENOMIC DNA]</scope>
    <source>
        <strain>ATCC BAA-895 / CDC 4225-83 / SGSC4696</strain>
    </source>
</reference>
<proteinExistence type="inferred from homology"/>
<accession>A8AD51</accession>
<keyword id="KW-0001">2Fe-2S</keyword>
<keyword id="KW-0010">Activator</keyword>
<keyword id="KW-0238">DNA-binding</keyword>
<keyword id="KW-0408">Iron</keyword>
<keyword id="KW-0411">Iron-sulfur</keyword>
<keyword id="KW-0479">Metal-binding</keyword>
<keyword id="KW-1185">Reference proteome</keyword>
<keyword id="KW-0678">Repressor</keyword>
<keyword id="KW-0804">Transcription</keyword>
<keyword id="KW-0805">Transcription regulation</keyword>
<organism>
    <name type="scientific">Citrobacter koseri (strain ATCC BAA-895 / CDC 4225-83 / SGSC4696)</name>
    <dbReference type="NCBI Taxonomy" id="290338"/>
    <lineage>
        <taxon>Bacteria</taxon>
        <taxon>Pseudomonadati</taxon>
        <taxon>Pseudomonadota</taxon>
        <taxon>Gammaproteobacteria</taxon>
        <taxon>Enterobacterales</taxon>
        <taxon>Enterobacteriaceae</taxon>
        <taxon>Citrobacter</taxon>
    </lineage>
</organism>
<protein>
    <recommendedName>
        <fullName evidence="1">HTH-type transcriptional regulator IscR</fullName>
    </recommendedName>
</protein>